<keyword id="KW-0067">ATP-binding</keyword>
<keyword id="KW-0378">Hydrolase</keyword>
<keyword id="KW-0408">Iron</keyword>
<keyword id="KW-0411">Iron-sulfur</keyword>
<keyword id="KW-0479">Metal-binding</keyword>
<keyword id="KW-0547">Nucleotide-binding</keyword>
<keyword id="KW-1185">Reference proteome</keyword>
<gene>
    <name type="ordered locus">MJ0283</name>
</gene>
<dbReference type="EMBL" id="L77117">
    <property type="protein sequence ID" value="AAB98271.1"/>
    <property type="molecule type" value="Genomic_DNA"/>
</dbReference>
<dbReference type="PIR" id="D64335">
    <property type="entry name" value="D64335"/>
</dbReference>
<dbReference type="RefSeq" id="WP_010869781.1">
    <property type="nucleotide sequence ID" value="NC_000909.1"/>
</dbReference>
<dbReference type="SMR" id="Q57731"/>
<dbReference type="FunCoup" id="Q57731">
    <property type="interactions" value="130"/>
</dbReference>
<dbReference type="STRING" id="243232.MJ_0283"/>
<dbReference type="PaxDb" id="243232-MJ_0283"/>
<dbReference type="EnsemblBacteria" id="AAB98271">
    <property type="protein sequence ID" value="AAB98271"/>
    <property type="gene ID" value="MJ_0283"/>
</dbReference>
<dbReference type="GeneID" id="1451138"/>
<dbReference type="KEGG" id="mja:MJ_0283"/>
<dbReference type="eggNOG" id="arCOG00585">
    <property type="taxonomic scope" value="Archaea"/>
</dbReference>
<dbReference type="HOGENOM" id="CLU_024839_0_1_2"/>
<dbReference type="InParanoid" id="Q57731"/>
<dbReference type="OrthoDB" id="8297at2157"/>
<dbReference type="PhylomeDB" id="Q57731"/>
<dbReference type="Proteomes" id="UP000000805">
    <property type="component" value="Chromosome"/>
</dbReference>
<dbReference type="GO" id="GO:0005829">
    <property type="term" value="C:cytosol"/>
    <property type="evidence" value="ECO:0000318"/>
    <property type="project" value="GO_Central"/>
</dbReference>
<dbReference type="GO" id="GO:0005524">
    <property type="term" value="F:ATP binding"/>
    <property type="evidence" value="ECO:0007669"/>
    <property type="project" value="UniProtKB-UniRule"/>
</dbReference>
<dbReference type="GO" id="GO:0016887">
    <property type="term" value="F:ATP hydrolysis activity"/>
    <property type="evidence" value="ECO:0007669"/>
    <property type="project" value="UniProtKB-UniRule"/>
</dbReference>
<dbReference type="GO" id="GO:0140663">
    <property type="term" value="F:ATP-dependent FeS chaperone activity"/>
    <property type="evidence" value="ECO:0007669"/>
    <property type="project" value="InterPro"/>
</dbReference>
<dbReference type="GO" id="GO:0051536">
    <property type="term" value="F:iron-sulfur cluster binding"/>
    <property type="evidence" value="ECO:0000318"/>
    <property type="project" value="GO_Central"/>
</dbReference>
<dbReference type="GO" id="GO:0046872">
    <property type="term" value="F:metal ion binding"/>
    <property type="evidence" value="ECO:0007669"/>
    <property type="project" value="UniProtKB-KW"/>
</dbReference>
<dbReference type="GO" id="GO:0016226">
    <property type="term" value="P:iron-sulfur cluster assembly"/>
    <property type="evidence" value="ECO:0000318"/>
    <property type="project" value="GO_Central"/>
</dbReference>
<dbReference type="CDD" id="cd02037">
    <property type="entry name" value="Mrp_NBP35"/>
    <property type="match status" value="1"/>
</dbReference>
<dbReference type="FunFam" id="3.40.50.300:FF:001119">
    <property type="entry name" value="Iron-sulfur cluster carrier protein"/>
    <property type="match status" value="1"/>
</dbReference>
<dbReference type="Gene3D" id="3.40.50.300">
    <property type="entry name" value="P-loop containing nucleotide triphosphate hydrolases"/>
    <property type="match status" value="1"/>
</dbReference>
<dbReference type="HAMAP" id="MF_02040">
    <property type="entry name" value="Mrp_NBP35"/>
    <property type="match status" value="1"/>
</dbReference>
<dbReference type="InterPro" id="IPR000808">
    <property type="entry name" value="Mrp-like_CS"/>
</dbReference>
<dbReference type="InterPro" id="IPR019591">
    <property type="entry name" value="Mrp/NBP35_ATP-bd"/>
</dbReference>
<dbReference type="InterPro" id="IPR027417">
    <property type="entry name" value="P-loop_NTPase"/>
</dbReference>
<dbReference type="InterPro" id="IPR033756">
    <property type="entry name" value="YlxH/NBP35"/>
</dbReference>
<dbReference type="PANTHER" id="PTHR23264:SF19">
    <property type="entry name" value="CYTOSOLIC FE-S CLUSTER ASSEMBLY FACTOR NUBP2"/>
    <property type="match status" value="1"/>
</dbReference>
<dbReference type="PANTHER" id="PTHR23264">
    <property type="entry name" value="NUCLEOTIDE-BINDING PROTEIN NBP35 YEAST -RELATED"/>
    <property type="match status" value="1"/>
</dbReference>
<dbReference type="Pfam" id="PF10609">
    <property type="entry name" value="ParA"/>
    <property type="match status" value="1"/>
</dbReference>
<dbReference type="SUPFAM" id="SSF52540">
    <property type="entry name" value="P-loop containing nucleoside triphosphate hydrolases"/>
    <property type="match status" value="1"/>
</dbReference>
<dbReference type="PROSITE" id="PS01215">
    <property type="entry name" value="MRP"/>
    <property type="match status" value="1"/>
</dbReference>
<reference key="1">
    <citation type="journal article" date="1996" name="Science">
        <title>Complete genome sequence of the methanogenic archaeon, Methanococcus jannaschii.</title>
        <authorList>
            <person name="Bult C.J."/>
            <person name="White O."/>
            <person name="Olsen G.J."/>
            <person name="Zhou L."/>
            <person name="Fleischmann R.D."/>
            <person name="Sutton G.G."/>
            <person name="Blake J.A."/>
            <person name="FitzGerald L.M."/>
            <person name="Clayton R.A."/>
            <person name="Gocayne J.D."/>
            <person name="Kerlavage A.R."/>
            <person name="Dougherty B.A."/>
            <person name="Tomb J.-F."/>
            <person name="Adams M.D."/>
            <person name="Reich C.I."/>
            <person name="Overbeek R."/>
            <person name="Kirkness E.F."/>
            <person name="Weinstock K.G."/>
            <person name="Merrick J.M."/>
            <person name="Glodek A."/>
            <person name="Scott J.L."/>
            <person name="Geoghagen N.S.M."/>
            <person name="Weidman J.F."/>
            <person name="Fuhrmann J.L."/>
            <person name="Nguyen D."/>
            <person name="Utterback T.R."/>
            <person name="Kelley J.M."/>
            <person name="Peterson J.D."/>
            <person name="Sadow P.W."/>
            <person name="Hanna M.C."/>
            <person name="Cotton M.D."/>
            <person name="Roberts K.M."/>
            <person name="Hurst M.A."/>
            <person name="Kaine B.P."/>
            <person name="Borodovsky M."/>
            <person name="Klenk H.-P."/>
            <person name="Fraser C.M."/>
            <person name="Smith H.O."/>
            <person name="Woese C.R."/>
            <person name="Venter J.C."/>
        </authorList>
    </citation>
    <scope>NUCLEOTIDE SEQUENCE [LARGE SCALE GENOMIC DNA]</scope>
    <source>
        <strain>ATCC 43067 / DSM 2661 / JAL-1 / JCM 10045 / NBRC 100440</strain>
    </source>
</reference>
<reference key="2">
    <citation type="journal article" date="2009" name="J. Bacteriol.">
        <title>Archaeal ApbC/Nbp35 homologs function as iron-sulfur cluster carrier proteins.</title>
        <authorList>
            <person name="Boyd J.M."/>
            <person name="Drevland R.M."/>
            <person name="Downs D.M."/>
            <person name="Graham D.E."/>
        </authorList>
    </citation>
    <scope>FUNCTION</scope>
    <source>
        <strain>ATCC 43067 / DSM 2661 / JAL-1 / JCM 10045 / NBRC 100440</strain>
    </source>
</reference>
<proteinExistence type="inferred from homology"/>
<evidence type="ECO:0000255" key="1">
    <source>
        <dbReference type="HAMAP-Rule" id="MF_02040"/>
    </source>
</evidence>
<evidence type="ECO:0000269" key="2">
    <source>
    </source>
</evidence>
<evidence type="ECO:0000303" key="3">
    <source>
    </source>
</evidence>
<organism>
    <name type="scientific">Methanocaldococcus jannaschii (strain ATCC 43067 / DSM 2661 / JAL-1 / JCM 10045 / NBRC 100440)</name>
    <name type="common">Methanococcus jannaschii</name>
    <dbReference type="NCBI Taxonomy" id="243232"/>
    <lineage>
        <taxon>Archaea</taxon>
        <taxon>Methanobacteriati</taxon>
        <taxon>Methanobacteriota</taxon>
        <taxon>Methanomada group</taxon>
        <taxon>Methanococci</taxon>
        <taxon>Methanococcales</taxon>
        <taxon>Methanocaldococcaceae</taxon>
        <taxon>Methanocaldococcus</taxon>
    </lineage>
</organism>
<accession>Q57731</accession>
<name>APBC_METJA</name>
<feature type="chain" id="PRO_0000184953" description="Iron-sulfur cluster carrier protein">
    <location>
        <begin position="1"/>
        <end position="290"/>
    </location>
</feature>
<feature type="binding site" evidence="1">
    <location>
        <begin position="47"/>
        <end position="54"/>
    </location>
    <ligand>
        <name>ATP</name>
        <dbReference type="ChEBI" id="CHEBI:30616"/>
    </ligand>
</feature>
<protein>
    <recommendedName>
        <fullName evidence="1 3">Iron-sulfur cluster carrier protein</fullName>
    </recommendedName>
</protein>
<sequence>MAECDGKCDTCPSKNTCPDTKKLLAQQDAKIRENMSKIKHKIVILSGKGGVGKSTVTVNLAAALNLMGKKVGVLDADIHGPNIPKMLGVENTQPMAGPAGIFPIVTKDGIKTMSIGYLLPDDKTPVIWRGPKVSGAIRQFLSDVVWGELDYLLIDTPPGTGDEQLTIMQSIPDIDGAIIVTTPEEVSVLDVKKSIMMAKMLNIPIIGIIENMSGFVCPYCNKVVDIFGRGGGEKAAKELGVEFLGRIPLDIKAREASDKGIPMVLLDCKASEEFKKIVKRIVEKVEGKKE</sequence>
<comment type="function">
    <text evidence="1 2">Binds and transfers iron-sulfur (Fe-S) clusters to target apoproteins. Can hydrolyze ATP.</text>
</comment>
<comment type="subunit">
    <text evidence="1">Homodimer.</text>
</comment>
<comment type="similarity">
    <text evidence="1">Belongs to the Mrp/NBP35 ATP-binding proteins family.</text>
</comment>